<sequence>FWGALIKGAAKLIPSVVGLFKKKQ</sequence>
<protein>
    <recommendedName>
        <fullName evidence="3">M-poneritoxin-Ng1e</fullName>
        <shortName evidence="3">M-PONTX-Ng1e</shortName>
    </recommendedName>
    <alternativeName>
        <fullName evidence="4">Poneratoxin</fullName>
    </alternativeName>
    <alternativeName>
        <fullName evidence="2">Ponericin-W5</fullName>
    </alternativeName>
</protein>
<reference key="1">
    <citation type="journal article" date="2001" name="J. Biol. Chem.">
        <title>Ponericins, new antibacterial and insecticidal peptides from the venom of the ant Pachycondyla goeldii.</title>
        <authorList>
            <person name="Orivel J."/>
            <person name="Redeker V."/>
            <person name="Le Caer J.-P."/>
            <person name="Krier F."/>
            <person name="Revol-Junelles A.-M."/>
            <person name="Longeon A."/>
            <person name="Chafotte A."/>
            <person name="Dejean A."/>
            <person name="Rossier J."/>
        </authorList>
    </citation>
    <scope>PROTEIN SEQUENCE</scope>
    <scope>FUNCTION</scope>
    <scope>SUBCELLULAR LOCATION</scope>
    <scope>MASS SPECTROMETRY</scope>
    <source>
        <tissue>Venom</tissue>
    </source>
</reference>
<reference key="2">
    <citation type="journal article" date="2016" name="Toxins">
        <title>The biochemical toxin arsenal from ant venoms.</title>
        <authorList>
            <person name="Touchard A."/>
            <person name="Aili S.R."/>
            <person name="Fox E.G."/>
            <person name="Escoubas P."/>
            <person name="Orivel J."/>
            <person name="Nicholson G.M."/>
            <person name="Dejean A."/>
        </authorList>
    </citation>
    <scope>REVIEW</scope>
    <scope>NOMENCLATURE</scope>
</reference>
<name>WTX1E_NEOGO</name>
<evidence type="ECO:0000269" key="1">
    <source>
    </source>
</evidence>
<evidence type="ECO:0000303" key="2">
    <source>
    </source>
</evidence>
<evidence type="ECO:0000303" key="3">
    <source>
    </source>
</evidence>
<evidence type="ECO:0000305" key="4"/>
<evidence type="ECO:0000305" key="5">
    <source>
    </source>
</evidence>
<dbReference type="TCDB" id="1.C.124.1.5">
    <property type="family name" value="the antimicrobial pore-forming pandinin (pin) family"/>
</dbReference>
<dbReference type="GO" id="GO:0005576">
    <property type="term" value="C:extracellular region"/>
    <property type="evidence" value="ECO:0007669"/>
    <property type="project" value="UniProtKB-SubCell"/>
</dbReference>
<dbReference type="GO" id="GO:0016020">
    <property type="term" value="C:membrane"/>
    <property type="evidence" value="ECO:0007669"/>
    <property type="project" value="UniProtKB-KW"/>
</dbReference>
<dbReference type="GO" id="GO:0044218">
    <property type="term" value="C:other organism cell membrane"/>
    <property type="evidence" value="ECO:0007669"/>
    <property type="project" value="UniProtKB-KW"/>
</dbReference>
<dbReference type="GO" id="GO:0090729">
    <property type="term" value="F:toxin activity"/>
    <property type="evidence" value="ECO:0007669"/>
    <property type="project" value="UniProtKB-KW"/>
</dbReference>
<dbReference type="GO" id="GO:0042742">
    <property type="term" value="P:defense response to bacterium"/>
    <property type="evidence" value="ECO:0007669"/>
    <property type="project" value="UniProtKB-KW"/>
</dbReference>
<dbReference type="GO" id="GO:0050832">
    <property type="term" value="P:defense response to fungus"/>
    <property type="evidence" value="ECO:0007669"/>
    <property type="project" value="UniProtKB-KW"/>
</dbReference>
<dbReference type="GO" id="GO:0031640">
    <property type="term" value="P:killing of cells of another organism"/>
    <property type="evidence" value="ECO:0007669"/>
    <property type="project" value="UniProtKB-KW"/>
</dbReference>
<dbReference type="InterPro" id="IPR012523">
    <property type="entry name" value="Antimicrobial_4"/>
</dbReference>
<dbReference type="Pfam" id="PF08024">
    <property type="entry name" value="Antimicrobial_4"/>
    <property type="match status" value="1"/>
</dbReference>
<organism>
    <name type="scientific">Neoponera goeldii</name>
    <name type="common">Ponerine ant</name>
    <name type="synonym">Pachycondyla goeldii</name>
    <dbReference type="NCBI Taxonomy" id="3057131"/>
    <lineage>
        <taxon>Eukaryota</taxon>
        <taxon>Metazoa</taxon>
        <taxon>Ecdysozoa</taxon>
        <taxon>Arthropoda</taxon>
        <taxon>Hexapoda</taxon>
        <taxon>Insecta</taxon>
        <taxon>Pterygota</taxon>
        <taxon>Neoptera</taxon>
        <taxon>Endopterygota</taxon>
        <taxon>Hymenoptera</taxon>
        <taxon>Apocrita</taxon>
        <taxon>Aculeata</taxon>
        <taxon>Formicoidea</taxon>
        <taxon>Formicidae</taxon>
        <taxon>Ponerinae</taxon>
        <taxon>Ponerini</taxon>
        <taxon>Neoponera</taxon>
    </lineage>
</organism>
<keyword id="KW-0044">Antibiotic</keyword>
<keyword id="KW-0929">Antimicrobial</keyword>
<keyword id="KW-0204">Cytolysis</keyword>
<keyword id="KW-0903">Direct protein sequencing</keyword>
<keyword id="KW-0295">Fungicide</keyword>
<keyword id="KW-0354">Hemolysis</keyword>
<keyword id="KW-0472">Membrane</keyword>
<keyword id="KW-0964">Secreted</keyword>
<keyword id="KW-1052">Target cell membrane</keyword>
<keyword id="KW-1053">Target membrane</keyword>
<keyword id="KW-0800">Toxin</keyword>
<comment type="function">
    <text evidence="1">Has a broad spectrum of activity against both Gram-positive and Gram-negative bacteria and S.cerevisiae. Has insecticidal and hemolytic activities. May act by disrupting the integrity of the bacterial cell membrane.</text>
</comment>
<comment type="subcellular location">
    <subcellularLocation>
        <location evidence="1">Secreted</location>
    </subcellularLocation>
    <subcellularLocation>
        <location>Target cell membrane</location>
    </subcellularLocation>
</comment>
<comment type="tissue specificity">
    <text evidence="5">Expressed by the venom gland.</text>
</comment>
<comment type="mass spectrometry"/>
<comment type="similarity">
    <text evidence="4">Belongs to the non-disulfide-bridged peptide (NDBP) superfamily. Medium-length antimicrobial peptide (group 3) family. Ponericin-W subfamily.</text>
</comment>
<feature type="peptide" id="PRO_0000044198" description="M-poneritoxin-Ng1e" evidence="1">
    <location>
        <begin position="1"/>
        <end position="24"/>
    </location>
</feature>
<proteinExistence type="evidence at protein level"/>
<accession>P82427</accession>